<gene>
    <name type="primary">Dnaaf1</name>
    <name type="synonym">Lrrc50</name>
</gene>
<protein>
    <recommendedName>
        <fullName>Dynein axonemal assembly factor 1</fullName>
    </recommendedName>
    <alternativeName>
        <fullName>Leucine-rich repeat-containing protein 50</fullName>
    </alternativeName>
</protein>
<name>DAAF1_PERCA</name>
<reference key="1">
    <citation type="journal article" date="2008" name="Genetics">
        <title>Comparative analysis of testis protein evolution in rodents.</title>
        <authorList>
            <person name="Turner L.M."/>
            <person name="Chuong E.B."/>
            <person name="Hoekstra H.E."/>
        </authorList>
    </citation>
    <scope>NUCLEOTIDE SEQUENCE [MRNA]</scope>
    <source>
        <strain>PGSC19</strain>
    </source>
</reference>
<proteinExistence type="evidence at transcript level"/>
<comment type="function">
    <text evidence="1">Cilium-specific protein required for the stability of the ciliary architecture. Plays a role in cytoplasmic preassembly of dynein arms (By similarity). Involved in regulation of microtubule-based cilia and actin-based brush border microvilli (By similarity).</text>
</comment>
<comment type="subcellular location">
    <subcellularLocation>
        <location evidence="1">Cell projection</location>
        <location evidence="1">Cilium</location>
    </subcellularLocation>
</comment>
<comment type="similarity">
    <text evidence="5">Belongs to the DNAAF1 family.</text>
</comment>
<sequence length="622" mass="68917">MHPEVSEQQADGATEPSLEESAGDHSGAGPGVRKEEINETKETCVGPSTTSCQSQKQQSGDSRLECRSGYARNDRDDRGPRMTKEFLQKLCKQHKLYITPALNDTLYLHFKGFDRIENLEEYTGLRCLWLECNGIQRIENLQAQSELRCLFLQVNLLHKIENLEPLQKLDALNLSNNYIKTIENLSCLPVLNTLQMAHNRLETVADIQHLGECLRLCVLDLSHNMLSDPEILSVLESMPCLRVLNLMGNPVTKHIPNYRRTVTVRLKQLTYLDDRPVFPKDRACAEAWARGGYAAEKEERLQWESREHKKITDSLEALAMIKRRAEERKKARDKGETPLPDSEESSSTSPEAQEKPPLGETQEKIELFVKGSFKAKDELFPEKPGGEEELAVVADRTVEEPDLSGSLAQSQIPLVATAEESTSSVAATDGARTEDTEAIALETKERLFIDDLPDLEDVDGMDISIEDQTKETGIPKIQVVSSLSDDSDPELNDSSLPMLEHTPTGSTGILSNIFAVCKDSSKAARVPLTDICKPTATTEVETQGQVFSTTRPQPLIQELGEDGRGENEPNQSLPAQSSEDGDSQLPEATPLGDRAENEAQSSLDLGEPSPRASLEDIEFGLD</sequence>
<dbReference type="EMBL" id="EU836302">
    <property type="protein sequence ID" value="ACI22871.1"/>
    <property type="molecule type" value="mRNA"/>
</dbReference>
<dbReference type="SMR" id="B6D5P6"/>
<dbReference type="GO" id="GO:0005930">
    <property type="term" value="C:axoneme"/>
    <property type="evidence" value="ECO:0000250"/>
    <property type="project" value="UniProtKB"/>
</dbReference>
<dbReference type="GO" id="GO:0070840">
    <property type="term" value="F:dynein complex binding"/>
    <property type="evidence" value="ECO:0000250"/>
    <property type="project" value="UniProtKB"/>
</dbReference>
<dbReference type="GO" id="GO:0035082">
    <property type="term" value="P:axoneme assembly"/>
    <property type="evidence" value="ECO:0007669"/>
    <property type="project" value="TreeGrafter"/>
</dbReference>
<dbReference type="GO" id="GO:0060271">
    <property type="term" value="P:cilium assembly"/>
    <property type="evidence" value="ECO:0000250"/>
    <property type="project" value="UniProtKB"/>
</dbReference>
<dbReference type="FunFam" id="3.80.10.10:FF:000349">
    <property type="entry name" value="Dynein assembly factor 1, axonemal"/>
    <property type="match status" value="1"/>
</dbReference>
<dbReference type="FunFam" id="3.80.10.10:FF:000394">
    <property type="entry name" value="Dynein assembly factor 1, axonemal"/>
    <property type="match status" value="1"/>
</dbReference>
<dbReference type="Gene3D" id="3.80.10.10">
    <property type="entry name" value="Ribonuclease Inhibitor"/>
    <property type="match status" value="2"/>
</dbReference>
<dbReference type="InterPro" id="IPR050576">
    <property type="entry name" value="Cilia_flagella_integrity"/>
</dbReference>
<dbReference type="InterPro" id="IPR001611">
    <property type="entry name" value="Leu-rich_rpt"/>
</dbReference>
<dbReference type="InterPro" id="IPR032675">
    <property type="entry name" value="LRR_dom_sf"/>
</dbReference>
<dbReference type="PANTHER" id="PTHR45973:SF19">
    <property type="entry name" value="DYNEIN AXONEMAL ASSEMBLY FACTOR 1"/>
    <property type="match status" value="1"/>
</dbReference>
<dbReference type="PANTHER" id="PTHR45973">
    <property type="entry name" value="PROTEIN PHOSPHATASE 1 REGULATORY SUBUNIT SDS22-RELATED"/>
    <property type="match status" value="1"/>
</dbReference>
<dbReference type="Pfam" id="PF14580">
    <property type="entry name" value="LRR_9"/>
    <property type="match status" value="1"/>
</dbReference>
<dbReference type="SMART" id="SM00365">
    <property type="entry name" value="LRR_SD22"/>
    <property type="match status" value="3"/>
</dbReference>
<dbReference type="SUPFAM" id="SSF52075">
    <property type="entry name" value="Outer arm dynein light chain 1"/>
    <property type="match status" value="1"/>
</dbReference>
<dbReference type="PROSITE" id="PS51450">
    <property type="entry name" value="LRR"/>
    <property type="match status" value="6"/>
</dbReference>
<accession>B6D5P6</accession>
<keyword id="KW-0966">Cell projection</keyword>
<keyword id="KW-0969">Cilium</keyword>
<keyword id="KW-0433">Leucine-rich repeat</keyword>
<keyword id="KW-0597">Phosphoprotein</keyword>
<keyword id="KW-0677">Repeat</keyword>
<evidence type="ECO:0000250" key="1"/>
<evidence type="ECO:0000250" key="2">
    <source>
        <dbReference type="UniProtKB" id="Q6AYH9"/>
    </source>
</evidence>
<evidence type="ECO:0000250" key="3">
    <source>
        <dbReference type="UniProtKB" id="Q9D2H9"/>
    </source>
</evidence>
<evidence type="ECO:0000256" key="4">
    <source>
        <dbReference type="SAM" id="MobiDB-lite"/>
    </source>
</evidence>
<evidence type="ECO:0000305" key="5"/>
<feature type="chain" id="PRO_0000363930" description="Dynein axonemal assembly factor 1">
    <location>
        <begin position="1"/>
        <end position="622"/>
    </location>
</feature>
<feature type="repeat" description="LRR 1">
    <location>
        <begin position="101"/>
        <end position="123"/>
    </location>
</feature>
<feature type="repeat" description="LRR 2">
    <location>
        <begin position="124"/>
        <end position="145"/>
    </location>
</feature>
<feature type="repeat" description="LRR 3">
    <location>
        <begin position="146"/>
        <end position="167"/>
    </location>
</feature>
<feature type="repeat" description="LRR 4">
    <location>
        <begin position="168"/>
        <end position="189"/>
    </location>
</feature>
<feature type="repeat" description="LRR 5">
    <location>
        <begin position="190"/>
        <end position="211"/>
    </location>
</feature>
<feature type="repeat" description="LRR 6">
    <location>
        <begin position="215"/>
        <end position="236"/>
    </location>
</feature>
<feature type="domain" description="LRRCT">
    <location>
        <begin position="249"/>
        <end position="288"/>
    </location>
</feature>
<feature type="region of interest" description="Disordered" evidence="4">
    <location>
        <begin position="1"/>
        <end position="80"/>
    </location>
</feature>
<feature type="region of interest" description="Disordered" evidence="4">
    <location>
        <begin position="326"/>
        <end position="363"/>
    </location>
</feature>
<feature type="region of interest" description="Disordered" evidence="4">
    <location>
        <begin position="481"/>
        <end position="505"/>
    </location>
</feature>
<feature type="region of interest" description="Disordered" evidence="4">
    <location>
        <begin position="535"/>
        <end position="622"/>
    </location>
</feature>
<feature type="compositionally biased region" description="Polar residues" evidence="4">
    <location>
        <begin position="1"/>
        <end position="11"/>
    </location>
</feature>
<feature type="compositionally biased region" description="Basic and acidic residues" evidence="4">
    <location>
        <begin position="32"/>
        <end position="42"/>
    </location>
</feature>
<feature type="compositionally biased region" description="Low complexity" evidence="4">
    <location>
        <begin position="48"/>
        <end position="59"/>
    </location>
</feature>
<feature type="compositionally biased region" description="Basic and acidic residues" evidence="4">
    <location>
        <begin position="62"/>
        <end position="80"/>
    </location>
</feature>
<feature type="compositionally biased region" description="Basic and acidic residues" evidence="4">
    <location>
        <begin position="326"/>
        <end position="336"/>
    </location>
</feature>
<feature type="compositionally biased region" description="Low complexity" evidence="4">
    <location>
        <begin position="337"/>
        <end position="351"/>
    </location>
</feature>
<feature type="compositionally biased region" description="Polar residues" evidence="4">
    <location>
        <begin position="535"/>
        <end position="552"/>
    </location>
</feature>
<feature type="compositionally biased region" description="Polar residues" evidence="4">
    <location>
        <begin position="568"/>
        <end position="578"/>
    </location>
</feature>
<feature type="modified residue" description="Phosphoserine" evidence="2">
    <location>
        <position position="349"/>
    </location>
</feature>
<feature type="modified residue" description="Phosphoserine" evidence="3">
    <location>
        <position position="464"/>
    </location>
</feature>
<feature type="modified residue" description="Phosphoserine" evidence="3">
    <location>
        <position position="487"/>
    </location>
</feature>
<organism>
    <name type="scientific">Peromyscus californicus</name>
    <name type="common">California mouse</name>
    <dbReference type="NCBI Taxonomy" id="42520"/>
    <lineage>
        <taxon>Eukaryota</taxon>
        <taxon>Metazoa</taxon>
        <taxon>Chordata</taxon>
        <taxon>Craniata</taxon>
        <taxon>Vertebrata</taxon>
        <taxon>Euteleostomi</taxon>
        <taxon>Mammalia</taxon>
        <taxon>Eutheria</taxon>
        <taxon>Euarchontoglires</taxon>
        <taxon>Glires</taxon>
        <taxon>Rodentia</taxon>
        <taxon>Myomorpha</taxon>
        <taxon>Muroidea</taxon>
        <taxon>Cricetidae</taxon>
        <taxon>Neotominae</taxon>
        <taxon>Peromyscus</taxon>
    </lineage>
</organism>